<organism>
    <name type="scientific">Candida albicans (strain SC5314 / ATCC MYA-2876)</name>
    <name type="common">Yeast</name>
    <dbReference type="NCBI Taxonomy" id="237561"/>
    <lineage>
        <taxon>Eukaryota</taxon>
        <taxon>Fungi</taxon>
        <taxon>Dikarya</taxon>
        <taxon>Ascomycota</taxon>
        <taxon>Saccharomycotina</taxon>
        <taxon>Pichiomycetes</taxon>
        <taxon>Debaryomycetaceae</taxon>
        <taxon>Candida/Lodderomyces clade</taxon>
        <taxon>Candida</taxon>
    </lineage>
</organism>
<name>GUF1_CANAL</name>
<keyword id="KW-0342">GTP-binding</keyword>
<keyword id="KW-0378">Hydrolase</keyword>
<keyword id="KW-0472">Membrane</keyword>
<keyword id="KW-0496">Mitochondrion</keyword>
<keyword id="KW-0999">Mitochondrion inner membrane</keyword>
<keyword id="KW-0547">Nucleotide-binding</keyword>
<keyword id="KW-0648">Protein biosynthesis</keyword>
<keyword id="KW-1185">Reference proteome</keyword>
<evidence type="ECO:0000255" key="1">
    <source>
        <dbReference type="HAMAP-Rule" id="MF_03137"/>
    </source>
</evidence>
<evidence type="ECO:0000305" key="2"/>
<comment type="function">
    <text evidence="1">Promotes mitochondrial protein synthesis. May act as a fidelity factor of the translation reaction, by catalyzing a one-codon backward translocation of tRNAs on improperly translocated ribosomes. Binds to mitochondrial ribosomes in a GTP-dependent manner.</text>
</comment>
<comment type="catalytic activity">
    <reaction evidence="1">
        <text>GTP + H2O = GDP + phosphate + H(+)</text>
        <dbReference type="Rhea" id="RHEA:19669"/>
        <dbReference type="ChEBI" id="CHEBI:15377"/>
        <dbReference type="ChEBI" id="CHEBI:15378"/>
        <dbReference type="ChEBI" id="CHEBI:37565"/>
        <dbReference type="ChEBI" id="CHEBI:43474"/>
        <dbReference type="ChEBI" id="CHEBI:58189"/>
    </reaction>
</comment>
<comment type="subcellular location">
    <subcellularLocation>
        <location evidence="1">Mitochondrion inner membrane</location>
        <topology evidence="1">Peripheral membrane protein</topology>
        <orientation evidence="1">Matrix side</orientation>
    </subcellularLocation>
</comment>
<comment type="miscellaneous">
    <text evidence="1">This protein may be expected to contain an N-terminal transit peptide but none has been predicted.</text>
</comment>
<comment type="similarity">
    <text evidence="2">Belongs to the TRAFAC class translation factor GTPase superfamily. Classic translation factor GTPase family. LepA subfamily.</text>
</comment>
<accession>Q59P53</accession>
<accession>A0A1D8PHK7</accession>
<reference key="1">
    <citation type="journal article" date="2004" name="Proc. Natl. Acad. Sci. U.S.A.">
        <title>The diploid genome sequence of Candida albicans.</title>
        <authorList>
            <person name="Jones T."/>
            <person name="Federspiel N.A."/>
            <person name="Chibana H."/>
            <person name="Dungan J."/>
            <person name="Kalman S."/>
            <person name="Magee B.B."/>
            <person name="Newport G."/>
            <person name="Thorstenson Y.R."/>
            <person name="Agabian N."/>
            <person name="Magee P.T."/>
            <person name="Davis R.W."/>
            <person name="Scherer S."/>
        </authorList>
    </citation>
    <scope>NUCLEOTIDE SEQUENCE [LARGE SCALE GENOMIC DNA]</scope>
    <source>
        <strain>SC5314 / ATCC MYA-2876</strain>
    </source>
</reference>
<reference key="2">
    <citation type="journal article" date="2007" name="Genome Biol.">
        <title>Assembly of the Candida albicans genome into sixteen supercontigs aligned on the eight chromosomes.</title>
        <authorList>
            <person name="van het Hoog M."/>
            <person name="Rast T.J."/>
            <person name="Martchenko M."/>
            <person name="Grindle S."/>
            <person name="Dignard D."/>
            <person name="Hogues H."/>
            <person name="Cuomo C."/>
            <person name="Berriman M."/>
            <person name="Scherer S."/>
            <person name="Magee B.B."/>
            <person name="Whiteway M."/>
            <person name="Chibana H."/>
            <person name="Nantel A."/>
            <person name="Magee P.T."/>
        </authorList>
    </citation>
    <scope>GENOME REANNOTATION</scope>
    <source>
        <strain>SC5314 / ATCC MYA-2876</strain>
    </source>
</reference>
<reference key="3">
    <citation type="journal article" date="2013" name="Genome Biol.">
        <title>Assembly of a phased diploid Candida albicans genome facilitates allele-specific measurements and provides a simple model for repeat and indel structure.</title>
        <authorList>
            <person name="Muzzey D."/>
            <person name="Schwartz K."/>
            <person name="Weissman J.S."/>
            <person name="Sherlock G."/>
        </authorList>
    </citation>
    <scope>NUCLEOTIDE SEQUENCE [LARGE SCALE GENOMIC DNA]</scope>
    <scope>GENOME REANNOTATION</scope>
    <source>
        <strain>SC5314 / ATCC MYA-2876</strain>
    </source>
</reference>
<protein>
    <recommendedName>
        <fullName evidence="1">Translation factor GUF1, mitochondrial</fullName>
        <ecNumber>3.6.5.-</ecNumber>
    </recommendedName>
    <alternativeName>
        <fullName evidence="1">Elongation factor 4 homolog</fullName>
        <shortName evidence="1">EF-4</shortName>
    </alternativeName>
    <alternativeName>
        <fullName evidence="1">GTPase GUF1</fullName>
    </alternativeName>
    <alternativeName>
        <fullName evidence="1">Ribosomal back-translocase</fullName>
    </alternativeName>
</protein>
<gene>
    <name evidence="1" type="primary">GUF1</name>
    <name type="ordered locus">CAALFM_C206200CA</name>
    <name type="ORF">CaO19.12938</name>
    <name type="ORF">CaO19.5483</name>
</gene>
<dbReference type="EC" id="3.6.5.-"/>
<dbReference type="EMBL" id="CP017624">
    <property type="protein sequence ID" value="AOW27628.1"/>
    <property type="molecule type" value="Genomic_DNA"/>
</dbReference>
<dbReference type="RefSeq" id="XP_711475.1">
    <property type="nucleotide sequence ID" value="XM_706383.2"/>
</dbReference>
<dbReference type="SMR" id="Q59P53"/>
<dbReference type="FunCoup" id="Q59P53">
    <property type="interactions" value="750"/>
</dbReference>
<dbReference type="STRING" id="237561.Q59P53"/>
<dbReference type="EnsemblFungi" id="C2_06200C_A-T">
    <property type="protein sequence ID" value="C2_06200C_A-T-p1"/>
    <property type="gene ID" value="C2_06200C_A"/>
</dbReference>
<dbReference type="GeneID" id="3646908"/>
<dbReference type="KEGG" id="cal:CAALFM_C206200CA"/>
<dbReference type="CGD" id="CAL0000194371">
    <property type="gene designation" value="orf19.12938"/>
</dbReference>
<dbReference type="VEuPathDB" id="FungiDB:C2_06200C_A"/>
<dbReference type="eggNOG" id="KOG0462">
    <property type="taxonomic scope" value="Eukaryota"/>
</dbReference>
<dbReference type="HOGENOM" id="CLU_009995_3_1_1"/>
<dbReference type="InParanoid" id="Q59P53"/>
<dbReference type="OrthoDB" id="1074at2759"/>
<dbReference type="PRO" id="PR:Q59P53"/>
<dbReference type="Proteomes" id="UP000000559">
    <property type="component" value="Chromosome 2"/>
</dbReference>
<dbReference type="GO" id="GO:0005743">
    <property type="term" value="C:mitochondrial inner membrane"/>
    <property type="evidence" value="ECO:0007669"/>
    <property type="project" value="UniProtKB-SubCell"/>
</dbReference>
<dbReference type="GO" id="GO:0005759">
    <property type="term" value="C:mitochondrial matrix"/>
    <property type="evidence" value="ECO:0007669"/>
    <property type="project" value="UniProtKB-UniRule"/>
</dbReference>
<dbReference type="GO" id="GO:0005739">
    <property type="term" value="C:mitochondrion"/>
    <property type="evidence" value="ECO:0000318"/>
    <property type="project" value="GO_Central"/>
</dbReference>
<dbReference type="GO" id="GO:0005525">
    <property type="term" value="F:GTP binding"/>
    <property type="evidence" value="ECO:0007669"/>
    <property type="project" value="UniProtKB-UniRule"/>
</dbReference>
<dbReference type="GO" id="GO:0003924">
    <property type="term" value="F:GTPase activity"/>
    <property type="evidence" value="ECO:0007669"/>
    <property type="project" value="UniProtKB-UniRule"/>
</dbReference>
<dbReference type="GO" id="GO:0097177">
    <property type="term" value="F:mitochondrial ribosome binding"/>
    <property type="evidence" value="ECO:0000318"/>
    <property type="project" value="GO_Central"/>
</dbReference>
<dbReference type="GO" id="GO:0045727">
    <property type="term" value="P:positive regulation of translation"/>
    <property type="evidence" value="ECO:0000318"/>
    <property type="project" value="GO_Central"/>
</dbReference>
<dbReference type="GO" id="GO:0006412">
    <property type="term" value="P:translation"/>
    <property type="evidence" value="ECO:0007669"/>
    <property type="project" value="UniProtKB-KW"/>
</dbReference>
<dbReference type="CDD" id="cd03699">
    <property type="entry name" value="EF4_II"/>
    <property type="match status" value="1"/>
</dbReference>
<dbReference type="CDD" id="cd16260">
    <property type="entry name" value="EF4_III"/>
    <property type="match status" value="1"/>
</dbReference>
<dbReference type="CDD" id="cd01890">
    <property type="entry name" value="LepA"/>
    <property type="match status" value="1"/>
</dbReference>
<dbReference type="CDD" id="cd03709">
    <property type="entry name" value="lepA_C"/>
    <property type="match status" value="1"/>
</dbReference>
<dbReference type="FunFam" id="3.40.50.300:FF:000078">
    <property type="entry name" value="Elongation factor 4"/>
    <property type="match status" value="1"/>
</dbReference>
<dbReference type="FunFam" id="2.40.30.10:FF:000015">
    <property type="entry name" value="Translation factor GUF1, mitochondrial"/>
    <property type="match status" value="1"/>
</dbReference>
<dbReference type="FunFam" id="3.30.70.240:FF:000007">
    <property type="entry name" value="Translation factor GUF1, mitochondrial"/>
    <property type="match status" value="1"/>
</dbReference>
<dbReference type="FunFam" id="3.30.70.2570:FF:000001">
    <property type="entry name" value="Translation factor GUF1, mitochondrial"/>
    <property type="match status" value="1"/>
</dbReference>
<dbReference type="FunFam" id="3.30.70.870:FF:000004">
    <property type="entry name" value="Translation factor GUF1, mitochondrial"/>
    <property type="match status" value="1"/>
</dbReference>
<dbReference type="Gene3D" id="3.30.70.240">
    <property type="match status" value="1"/>
</dbReference>
<dbReference type="Gene3D" id="3.30.70.2570">
    <property type="entry name" value="Elongation factor 4, C-terminal domain"/>
    <property type="match status" value="1"/>
</dbReference>
<dbReference type="Gene3D" id="3.30.70.870">
    <property type="entry name" value="Elongation Factor G (Translational Gtpase), domain 3"/>
    <property type="match status" value="1"/>
</dbReference>
<dbReference type="Gene3D" id="3.40.50.300">
    <property type="entry name" value="P-loop containing nucleotide triphosphate hydrolases"/>
    <property type="match status" value="1"/>
</dbReference>
<dbReference type="Gene3D" id="2.40.30.10">
    <property type="entry name" value="Translation factors"/>
    <property type="match status" value="1"/>
</dbReference>
<dbReference type="HAMAP" id="MF_00071">
    <property type="entry name" value="LepA"/>
    <property type="match status" value="1"/>
</dbReference>
<dbReference type="InterPro" id="IPR006297">
    <property type="entry name" value="EF-4"/>
</dbReference>
<dbReference type="InterPro" id="IPR035647">
    <property type="entry name" value="EFG_III/V"/>
</dbReference>
<dbReference type="InterPro" id="IPR000640">
    <property type="entry name" value="EFG_V-like"/>
</dbReference>
<dbReference type="InterPro" id="IPR004161">
    <property type="entry name" value="EFTu-like_2"/>
</dbReference>
<dbReference type="InterPro" id="IPR031157">
    <property type="entry name" value="G_TR_CS"/>
</dbReference>
<dbReference type="InterPro" id="IPR038363">
    <property type="entry name" value="LepA_C_sf"/>
</dbReference>
<dbReference type="InterPro" id="IPR013842">
    <property type="entry name" value="LepA_CTD"/>
</dbReference>
<dbReference type="InterPro" id="IPR035654">
    <property type="entry name" value="LepA_IV"/>
</dbReference>
<dbReference type="InterPro" id="IPR027417">
    <property type="entry name" value="P-loop_NTPase"/>
</dbReference>
<dbReference type="InterPro" id="IPR005225">
    <property type="entry name" value="Small_GTP-bd"/>
</dbReference>
<dbReference type="InterPro" id="IPR000795">
    <property type="entry name" value="T_Tr_GTP-bd_dom"/>
</dbReference>
<dbReference type="InterPro" id="IPR009000">
    <property type="entry name" value="Transl_B-barrel_sf"/>
</dbReference>
<dbReference type="NCBIfam" id="TIGR01393">
    <property type="entry name" value="lepA"/>
    <property type="match status" value="1"/>
</dbReference>
<dbReference type="NCBIfam" id="TIGR00231">
    <property type="entry name" value="small_GTP"/>
    <property type="match status" value="1"/>
</dbReference>
<dbReference type="PANTHER" id="PTHR43512:SF7">
    <property type="entry name" value="TRANSLATION FACTOR GUF1, MITOCHONDRIAL"/>
    <property type="match status" value="1"/>
</dbReference>
<dbReference type="PANTHER" id="PTHR43512">
    <property type="entry name" value="TRANSLATION FACTOR GUF1-RELATED"/>
    <property type="match status" value="1"/>
</dbReference>
<dbReference type="Pfam" id="PF00679">
    <property type="entry name" value="EFG_C"/>
    <property type="match status" value="1"/>
</dbReference>
<dbReference type="Pfam" id="PF00009">
    <property type="entry name" value="GTP_EFTU"/>
    <property type="match status" value="1"/>
</dbReference>
<dbReference type="Pfam" id="PF03144">
    <property type="entry name" value="GTP_EFTU_D2"/>
    <property type="match status" value="1"/>
</dbReference>
<dbReference type="Pfam" id="PF06421">
    <property type="entry name" value="LepA_C"/>
    <property type="match status" value="1"/>
</dbReference>
<dbReference type="PRINTS" id="PR00315">
    <property type="entry name" value="ELONGATNFCT"/>
</dbReference>
<dbReference type="SUPFAM" id="SSF54980">
    <property type="entry name" value="EF-G C-terminal domain-like"/>
    <property type="match status" value="2"/>
</dbReference>
<dbReference type="SUPFAM" id="SSF52540">
    <property type="entry name" value="P-loop containing nucleoside triphosphate hydrolases"/>
    <property type="match status" value="1"/>
</dbReference>
<dbReference type="SUPFAM" id="SSF50447">
    <property type="entry name" value="Translation proteins"/>
    <property type="match status" value="1"/>
</dbReference>
<dbReference type="PROSITE" id="PS00301">
    <property type="entry name" value="G_TR_1"/>
    <property type="match status" value="1"/>
</dbReference>
<dbReference type="PROSITE" id="PS51722">
    <property type="entry name" value="G_TR_2"/>
    <property type="match status" value="1"/>
</dbReference>
<sequence length="654" mass="73840">MLLRPNSGNTLKYGCLLTKRWLTTSKLLYSVEDMKIKIGQEQYRKALEERIDKIPIENYRNFSIVAHVDHGKSTLSDRLLEMTGVIKPGSKSQVLDKLDVERERGITVKAQTVSMFYNDGKQDYLLHLVDTPGHVDFRAEVSRSYASCGGALLLVDASQGVQAQTVANFYLAYSMGLKLIPIINKIDLDSANIPGAREQIETTFELDPNECIPVSAKTGLNVEQIIPSVIKNIPSPVCDVNKPLRALLVDSWHDPYVGVVMLVHIVDGRMKKGMKILSAHTNRTYDVKEVGIMYPDRTPTSFIKAGQVAYIIPGMKNPREALVGDTFYQMGKHEGLEPLPGFEEPKPMVFVGAFPADGKEFNAMDDQMQNLVLNDRSVTLEQETSNALGLGWRLGFLGSLHASVFKERLEKEYGAKIILTAPTVPYKIIYKNGEEKIVTNPDDFPDNQKHHDVESYMEPYVEAIMTVPNEYVGNVMTLCLNNRGEQKEIEYLTTGQVLLKYEIPTSQLVEDFFGKLKGCTKGYASLDYEEAGYRKSDIVKMQLCVNGEPQDALTTVIHRSQAQARGKEYVTRFKKFLSYQLFEVAIQAKINNKVVARETIKAKRKDVTQRLHAADISRYKKLLERQKEGKKQMKLSGRVTIKNDAYQAFLRRED</sequence>
<proteinExistence type="inferred from homology"/>
<feature type="chain" id="PRO_0000402878" description="Translation factor GUF1, mitochondrial">
    <location>
        <begin position="1"/>
        <end position="654"/>
    </location>
</feature>
<feature type="domain" description="tr-type G">
    <location>
        <begin position="57"/>
        <end position="237"/>
    </location>
</feature>
<feature type="binding site" evidence="1">
    <location>
        <begin position="66"/>
        <end position="73"/>
    </location>
    <ligand>
        <name>GTP</name>
        <dbReference type="ChEBI" id="CHEBI:37565"/>
    </ligand>
</feature>
<feature type="binding site" evidence="1">
    <location>
        <begin position="130"/>
        <end position="134"/>
    </location>
    <ligand>
        <name>GTP</name>
        <dbReference type="ChEBI" id="CHEBI:37565"/>
    </ligand>
</feature>
<feature type="binding site" evidence="1">
    <location>
        <begin position="184"/>
        <end position="187"/>
    </location>
    <ligand>
        <name>GTP</name>
        <dbReference type="ChEBI" id="CHEBI:37565"/>
    </ligand>
</feature>